<protein>
    <recommendedName>
        <fullName>Lysophospholipase 2</fullName>
        <ecNumber>3.1.1.5</ecNumber>
    </recommendedName>
    <alternativeName>
        <fullName>Phospholipase B 2</fullName>
    </alternativeName>
</protein>
<organism>
    <name type="scientific">Saccharomyces cerevisiae (strain ATCC 204508 / S288c)</name>
    <name type="common">Baker's yeast</name>
    <dbReference type="NCBI Taxonomy" id="559292"/>
    <lineage>
        <taxon>Eukaryota</taxon>
        <taxon>Fungi</taxon>
        <taxon>Dikarya</taxon>
        <taxon>Ascomycota</taxon>
        <taxon>Saccharomycotina</taxon>
        <taxon>Saccharomycetes</taxon>
        <taxon>Saccharomycetales</taxon>
        <taxon>Saccharomycetaceae</taxon>
        <taxon>Saccharomyces</taxon>
    </lineage>
</organism>
<evidence type="ECO:0000255" key="1"/>
<evidence type="ECO:0000255" key="2">
    <source>
        <dbReference type="PROSITE-ProRule" id="PRU00555"/>
    </source>
</evidence>
<evidence type="ECO:0000256" key="3">
    <source>
        <dbReference type="SAM" id="MobiDB-lite"/>
    </source>
</evidence>
<evidence type="ECO:0000269" key="4">
    <source>
    </source>
</evidence>
<evidence type="ECO:0000269" key="5">
    <source>
    </source>
</evidence>
<evidence type="ECO:0000269" key="6">
    <source>
    </source>
</evidence>
<evidence type="ECO:0000269" key="7">
    <source>
    </source>
</evidence>
<evidence type="ECO:0000305" key="8"/>
<evidence type="ECO:0000305" key="9">
    <source>
    </source>
</evidence>
<gene>
    <name type="primary">PLB2</name>
    <name type="ordered locus">YMR006C</name>
    <name type="ORF">YM8270.08C</name>
</gene>
<reference key="1">
    <citation type="journal article" date="1999" name="Biochemistry">
        <title>The PLB2 gene of Saccharomyces cerevisiae confers resistance to lysophosphatidylcholine and encodes a phospholipase B/lysophospholipase.</title>
        <authorList>
            <person name="Fyrst H."/>
            <person name="Oskouian B."/>
            <person name="Kuypers F.A."/>
            <person name="Saba J.D."/>
        </authorList>
    </citation>
    <scope>NUCLEOTIDE SEQUENCE [GENOMIC DNA]</scope>
    <scope>FUNCTION</scope>
    <scope>CATALYTIC ACTIVITY</scope>
    <scope>BIOPHYSICOCHEMICAL PROPERTIES</scope>
    <source>
        <strain>DG338</strain>
    </source>
</reference>
<reference key="2">
    <citation type="journal article" date="1997" name="Nature">
        <title>The nucleotide sequence of Saccharomyces cerevisiae chromosome XIII.</title>
        <authorList>
            <person name="Bowman S."/>
            <person name="Churcher C.M."/>
            <person name="Badcock K."/>
            <person name="Brown D."/>
            <person name="Chillingworth T."/>
            <person name="Connor R."/>
            <person name="Dedman K."/>
            <person name="Devlin K."/>
            <person name="Gentles S."/>
            <person name="Hamlin N."/>
            <person name="Hunt S."/>
            <person name="Jagels K."/>
            <person name="Lye G."/>
            <person name="Moule S."/>
            <person name="Odell C."/>
            <person name="Pearson D."/>
            <person name="Rajandream M.A."/>
            <person name="Rice P."/>
            <person name="Skelton J."/>
            <person name="Walsh S.V."/>
            <person name="Whitehead S."/>
            <person name="Barrell B.G."/>
        </authorList>
    </citation>
    <scope>NUCLEOTIDE SEQUENCE [LARGE SCALE GENOMIC DNA]</scope>
    <source>
        <strain>ATCC 204508 / S288c</strain>
    </source>
</reference>
<reference key="3">
    <citation type="journal article" date="2014" name="G3 (Bethesda)">
        <title>The reference genome sequence of Saccharomyces cerevisiae: Then and now.</title>
        <authorList>
            <person name="Engel S.R."/>
            <person name="Dietrich F.S."/>
            <person name="Fisk D.G."/>
            <person name="Binkley G."/>
            <person name="Balakrishnan R."/>
            <person name="Costanzo M.C."/>
            <person name="Dwight S.S."/>
            <person name="Hitz B.C."/>
            <person name="Karra K."/>
            <person name="Nash R.S."/>
            <person name="Weng S."/>
            <person name="Wong E.D."/>
            <person name="Lloyd P."/>
            <person name="Skrzypek M.S."/>
            <person name="Miyasato S.R."/>
            <person name="Simison M."/>
            <person name="Cherry J.M."/>
        </authorList>
    </citation>
    <scope>GENOME REANNOTATION</scope>
    <source>
        <strain>ATCC 204508 / S288c</strain>
    </source>
</reference>
<reference key="4">
    <citation type="journal article" date="2007" name="Genome Res.">
        <title>Approaching a complete repository of sequence-verified protein-encoding clones for Saccharomyces cerevisiae.</title>
        <authorList>
            <person name="Hu Y."/>
            <person name="Rolfs A."/>
            <person name="Bhullar B."/>
            <person name="Murthy T.V.S."/>
            <person name="Zhu C."/>
            <person name="Berger M.F."/>
            <person name="Camargo A.A."/>
            <person name="Kelley F."/>
            <person name="McCarron S."/>
            <person name="Jepson D."/>
            <person name="Richardson A."/>
            <person name="Raphael J."/>
            <person name="Moreira D."/>
            <person name="Taycher E."/>
            <person name="Zuo D."/>
            <person name="Mohr S."/>
            <person name="Kane M.F."/>
            <person name="Williamson J."/>
            <person name="Simpson A.J.G."/>
            <person name="Bulyk M.L."/>
            <person name="Harlow E."/>
            <person name="Marsischky G."/>
            <person name="Kolodner R.D."/>
            <person name="LaBaer J."/>
        </authorList>
    </citation>
    <scope>NUCLEOTIDE SEQUENCE [GENOMIC DNA]</scope>
    <source>
        <strain>ATCC 204508 / S288c</strain>
    </source>
</reference>
<reference key="5">
    <citation type="journal article" date="1999" name="J. Biol. Chem.">
        <title>Characterization and function in vivo of two novel phospholipases B/lysophospholipases from Saccharomyces cerevisiae.</title>
        <authorList>
            <person name="Merkel O."/>
            <person name="Fido M."/>
            <person name="Mayr J.A."/>
            <person name="Prueger H."/>
            <person name="Raab F."/>
            <person name="Zandonella G."/>
            <person name="Kohlwein S.D."/>
            <person name="Paltauf F."/>
        </authorList>
    </citation>
    <scope>FUNCTION</scope>
    <scope>SUBCELLULAR LOCATION</scope>
</reference>
<reference key="6">
    <citation type="journal article" date="2003" name="Nature">
        <title>Global analysis of protein expression in yeast.</title>
        <authorList>
            <person name="Ghaemmaghami S."/>
            <person name="Huh W.-K."/>
            <person name="Bower K."/>
            <person name="Howson R.W."/>
            <person name="Belle A."/>
            <person name="Dephoure N."/>
            <person name="O'Shea E.K."/>
            <person name="Weissman J.S."/>
        </authorList>
    </citation>
    <scope>LEVEL OF PROTEIN EXPRESSION [LARGE SCALE ANALYSIS]</scope>
</reference>
<reference key="7">
    <citation type="journal article" date="2005" name="Biochem. J.">
        <title>Regulation of activity in vitro and in vivo of three phospholipases B from Saccharomyces cerevisiae.</title>
        <authorList>
            <person name="Merkel O."/>
            <person name="Oskolkova O.V."/>
            <person name="Raab F."/>
            <person name="El-Toukhy R."/>
            <person name="Paltauf F."/>
        </authorList>
    </citation>
    <scope>FUNCTION</scope>
    <scope>SUBSTRATE SPECIFICITY</scope>
</reference>
<reference key="8">
    <citation type="journal article" date="2005" name="J. Biol. Chem.">
        <title>Comprehensive proteomic analysis of Saccharomyces cerevisiae cell walls: identification of proteins covalently attached via glycosylphosphatidylinositol remnants or mild alkali-sensitive linkages.</title>
        <authorList>
            <person name="Yin Q.Y."/>
            <person name="de Groot P.W.J."/>
            <person name="Dekker H.L."/>
            <person name="de Jong L."/>
            <person name="Klis F.M."/>
            <person name="de Koster C.G."/>
        </authorList>
    </citation>
    <scope>SUBCELLULAR LOCATION</scope>
    <scope>IDENTIFICATION BY MASS SPECTROMETRY</scope>
    <scope>GPI-ANCHOR</scope>
</reference>
<sequence length="706" mass="75455">MQLRNILQASSLISGLSLAADSSSTTGDGYAPSIIPCPSDDTSLVRNASGLSTAETDWLKKRDAYTKEALHSFLSRATSNFSDTSLLSTLFSSNSSNVPKIGIACSGGGYRAMLGGAGMIAAMDNRTDGANEHGLGGLLQSSTYLSGLSGGNWLTGTLAWNNWTSVQEIVDHMSESDSIWNITKSIVNPGGSNLTYTIERWESIVQEVQAKSDAGFNISLSDLWARALSYNFFPSLPDAGSALTWSSLRDVDVFKNGEMPLPITVADGRYPGTTVINLNATLFEFTPFEMGSWDPSLNAFTDVKYLGTNVTNGKPVNKDQCVSGYDNAGFVIATSASLFNEFSLEASTSTYYKMINSFANKYVNNLSQDDDDIAIYAANPFKDTEFVDRNYTSSIVDADDLFLVDGGEDGQNLPLVPLIKKERDLDVVFALDISDNTDESWPSGVCMTNTYERQYSKQGKGMAFPYVPDVNTFLNLGLTNKPTFFGCDAKNLTDLEYIPPLVVYIPNTKHSFNGNQSTLKMNYNVTERLGMIRNGFEAATMGNFTDDSNFLGCIGCAIIRRKQESLNATLPPECTKCFADYCWNGTLSTSANPELSGNSTYQSGAIASAISEATDGIPITALLGSSTSGNTTSNSTTSTSSNVTSNSNSSSNTTLNSNSSSSSISSSTARSSSSTANKANAAAISYANTNTLMSLLGAITALFGLI</sequence>
<comment type="function">
    <text evidence="4 5 7">Sequentially removes both fatty acyl groups from diacylglycerophospholipids and therefore has both phospholipase A and lysophospholipase activities. However, it does not display transacylase activity. Substrate preference is phosphatidylserine &gt; phosphatidylinositol &gt; phosphatidylcholine &gt; phosphatidylethanolamine (PubMed:10231538, PubMed:10497163). The substrate specificity is pH- and ion-dependent. In contrast with activities observed at optimum pH 3.5, the order of substrate preference at pH 5.5 is phosphatidylserine = phosphatidylethanolamine &gt; phosphatidylcholine &gt; phosphatidylinositol (PubMed:15588231).</text>
</comment>
<comment type="catalytic activity">
    <reaction>
        <text>a 1-acyl-sn-glycero-3-phosphocholine + H2O = sn-glycerol 3-phosphocholine + a fatty acid + H(+)</text>
        <dbReference type="Rhea" id="RHEA:15177"/>
        <dbReference type="ChEBI" id="CHEBI:15377"/>
        <dbReference type="ChEBI" id="CHEBI:15378"/>
        <dbReference type="ChEBI" id="CHEBI:16870"/>
        <dbReference type="ChEBI" id="CHEBI:28868"/>
        <dbReference type="ChEBI" id="CHEBI:58168"/>
        <dbReference type="EC" id="3.1.1.5"/>
    </reaction>
</comment>
<comment type="catalytic activity">
    <reaction evidence="4">
        <text>1-hexadecanoyl-sn-glycero-3-phosphoethanolamine + H2O = sn-glycero-3-phosphoethanolamine + hexadecanoate + H(+)</text>
        <dbReference type="Rhea" id="RHEA:40891"/>
        <dbReference type="ChEBI" id="CHEBI:7896"/>
        <dbReference type="ChEBI" id="CHEBI:15377"/>
        <dbReference type="ChEBI" id="CHEBI:15378"/>
        <dbReference type="ChEBI" id="CHEBI:73004"/>
        <dbReference type="ChEBI" id="CHEBI:143890"/>
    </reaction>
    <physiologicalReaction direction="left-to-right" evidence="9">
        <dbReference type="Rhea" id="RHEA:40892"/>
    </physiologicalReaction>
</comment>
<comment type="catalytic activity">
    <reaction evidence="4">
        <text>1-hexadecanoyl-sn-glycero-3-phosphocholine + H2O = sn-glycerol 3-phosphocholine + hexadecanoate + H(+)</text>
        <dbReference type="Rhea" id="RHEA:40435"/>
        <dbReference type="ChEBI" id="CHEBI:7896"/>
        <dbReference type="ChEBI" id="CHEBI:15377"/>
        <dbReference type="ChEBI" id="CHEBI:15378"/>
        <dbReference type="ChEBI" id="CHEBI:16870"/>
        <dbReference type="ChEBI" id="CHEBI:72998"/>
    </reaction>
    <physiologicalReaction direction="left-to-right" evidence="9">
        <dbReference type="Rhea" id="RHEA:40436"/>
    </physiologicalReaction>
</comment>
<comment type="catalytic activity">
    <reaction evidence="4">
        <text>1-hexadecanoyl-sn-glycero-3-phospho-L-serine + H2O = sn-glycero-3-phospho-L-serine + hexadecanoate + H(+)</text>
        <dbReference type="Rhea" id="RHEA:44552"/>
        <dbReference type="ChEBI" id="CHEBI:7896"/>
        <dbReference type="ChEBI" id="CHEBI:15377"/>
        <dbReference type="ChEBI" id="CHEBI:15378"/>
        <dbReference type="ChEBI" id="CHEBI:64765"/>
        <dbReference type="ChEBI" id="CHEBI:75020"/>
    </reaction>
    <physiologicalReaction direction="left-to-right" evidence="9">
        <dbReference type="Rhea" id="RHEA:44553"/>
    </physiologicalReaction>
</comment>
<comment type="catalytic activity">
    <reaction evidence="4">
        <text>1,2-dihexadecanoyl-sn-glycero-3-phosphocholine + H2O = 1-hexadecanoyl-sn-glycero-3-phosphocholine + hexadecanoate + H(+)</text>
        <dbReference type="Rhea" id="RHEA:41223"/>
        <dbReference type="ChEBI" id="CHEBI:7896"/>
        <dbReference type="ChEBI" id="CHEBI:15377"/>
        <dbReference type="ChEBI" id="CHEBI:15378"/>
        <dbReference type="ChEBI" id="CHEBI:72998"/>
        <dbReference type="ChEBI" id="CHEBI:72999"/>
    </reaction>
    <physiologicalReaction direction="left-to-right" evidence="9">
        <dbReference type="Rhea" id="RHEA:41224"/>
    </physiologicalReaction>
</comment>
<comment type="biophysicochemical properties">
    <phDependence>
        <text evidence="4">Optimum pH is 4.</text>
    </phDependence>
    <temperatureDependence>
        <text evidence="4">Optimum temperature is 40 degrees Celsius.</text>
    </temperatureDependence>
</comment>
<comment type="subcellular location">
    <subcellularLocation>
        <location>Secreted</location>
        <location>Cell wall</location>
    </subcellularLocation>
    <subcellularLocation>
        <location>Membrane</location>
        <topology>Lipid-anchor</topology>
        <topology>GPI-anchor</topology>
    </subcellularLocation>
    <text>Covalently-linked GPI-modified cell wall protein (GPI-CWP).</text>
</comment>
<comment type="PTM">
    <text>The GPI-anchor is attached to the protein in the endoplasmic reticulum and serves to target the protein to the cell surface. There, the glucosamine-inositol phospholipid moiety is cleaved off and the GPI-modified mannoprotein is covalently attached via its lipidless GPI glycan remnant to the 1,6-beta-glucan of the outer cell wall layer.</text>
</comment>
<comment type="miscellaneous">
    <text evidence="6">Present with 623 molecules/cell in log phase SD medium.</text>
</comment>
<comment type="similarity">
    <text evidence="8">Belongs to the lysophospholipase family.</text>
</comment>
<accession>Q03674</accession>
<accession>D6VZI1</accession>
<dbReference type="EC" id="3.1.1.5"/>
<dbReference type="EMBL" id="AF129165">
    <property type="protein sequence ID" value="AAD28616.1"/>
    <property type="molecule type" value="Genomic_DNA"/>
</dbReference>
<dbReference type="EMBL" id="Z48613">
    <property type="protein sequence ID" value="CAA88521.1"/>
    <property type="molecule type" value="Genomic_DNA"/>
</dbReference>
<dbReference type="EMBL" id="AY693181">
    <property type="protein sequence ID" value="AAT93200.1"/>
    <property type="molecule type" value="Genomic_DNA"/>
</dbReference>
<dbReference type="EMBL" id="BK006946">
    <property type="protein sequence ID" value="DAA09905.1"/>
    <property type="molecule type" value="Genomic_DNA"/>
</dbReference>
<dbReference type="PIR" id="S53035">
    <property type="entry name" value="S53035"/>
</dbReference>
<dbReference type="RefSeq" id="NP_013719.1">
    <property type="nucleotide sequence ID" value="NM_001182502.1"/>
</dbReference>
<dbReference type="SMR" id="Q03674"/>
<dbReference type="BioGRID" id="35176">
    <property type="interactions" value="121"/>
</dbReference>
<dbReference type="FunCoup" id="Q03674">
    <property type="interactions" value="129"/>
</dbReference>
<dbReference type="STRING" id="4932.YMR006C"/>
<dbReference type="SwissLipids" id="SLP:000000121"/>
<dbReference type="GlyCosmos" id="Q03674">
    <property type="glycosylation" value="25 sites, No reported glycans"/>
</dbReference>
<dbReference type="GlyGen" id="Q03674">
    <property type="glycosylation" value="28 sites, 1 O-linked glycan (3 sites)"/>
</dbReference>
<dbReference type="iPTMnet" id="Q03674"/>
<dbReference type="PaxDb" id="4932-YMR006C"/>
<dbReference type="PeptideAtlas" id="Q03674"/>
<dbReference type="EnsemblFungi" id="YMR006C_mRNA">
    <property type="protein sequence ID" value="YMR006C"/>
    <property type="gene ID" value="YMR006C"/>
</dbReference>
<dbReference type="GeneID" id="855018"/>
<dbReference type="KEGG" id="sce:YMR006C"/>
<dbReference type="AGR" id="SGD:S000004608"/>
<dbReference type="SGD" id="S000004608">
    <property type="gene designation" value="PLB2"/>
</dbReference>
<dbReference type="VEuPathDB" id="FungiDB:YMR006C"/>
<dbReference type="eggNOG" id="KOG1325">
    <property type="taxonomic scope" value="Eukaryota"/>
</dbReference>
<dbReference type="GeneTree" id="ENSGT01030000234606"/>
<dbReference type="HOGENOM" id="CLU_014602_0_0_1"/>
<dbReference type="InParanoid" id="Q03674"/>
<dbReference type="OMA" id="FARYCWN"/>
<dbReference type="OrthoDB" id="4084751at2759"/>
<dbReference type="BioCyc" id="MetaCyc:YMR006C-MONOMER"/>
<dbReference type="BioCyc" id="YEAST:YMR006C-MONOMER"/>
<dbReference type="Reactome" id="R-SCE-111995">
    <property type="pathway name" value="phospho-PLA2 pathway"/>
</dbReference>
<dbReference type="Reactome" id="R-SCE-1482788">
    <property type="pathway name" value="Acyl chain remodelling of PC"/>
</dbReference>
<dbReference type="Reactome" id="R-SCE-1482798">
    <property type="pathway name" value="Acyl chain remodeling of CL"/>
</dbReference>
<dbReference type="Reactome" id="R-SCE-1482801">
    <property type="pathway name" value="Acyl chain remodelling of PS"/>
</dbReference>
<dbReference type="Reactome" id="R-SCE-1482839">
    <property type="pathway name" value="Acyl chain remodelling of PE"/>
</dbReference>
<dbReference type="Reactome" id="R-SCE-1482922">
    <property type="pathway name" value="Acyl chain remodelling of PI"/>
</dbReference>
<dbReference type="Reactome" id="R-SCE-1482925">
    <property type="pathway name" value="Acyl chain remodelling of PG"/>
</dbReference>
<dbReference type="Reactome" id="R-SCE-1483115">
    <property type="pathway name" value="Hydrolysis of LPC"/>
</dbReference>
<dbReference type="Reactome" id="R-SCE-1483152">
    <property type="pathway name" value="Hydrolysis of LPE"/>
</dbReference>
<dbReference type="Reactome" id="R-SCE-1483166">
    <property type="pathway name" value="Synthesis of PA"/>
</dbReference>
<dbReference type="Reactome" id="R-SCE-2142753">
    <property type="pathway name" value="Arachidonate metabolism"/>
</dbReference>
<dbReference type="Reactome" id="R-SCE-418592">
    <property type="pathway name" value="ADP signalling through P2Y purinoceptor 1"/>
</dbReference>
<dbReference type="Reactome" id="R-SCE-432142">
    <property type="pathway name" value="Platelet sensitization by LDL"/>
</dbReference>
<dbReference type="Reactome" id="R-SCE-6811436">
    <property type="pathway name" value="COPI-independent Golgi-to-ER retrograde traffic"/>
</dbReference>
<dbReference type="BioGRID-ORCS" id="855018">
    <property type="hits" value="1 hit in 10 CRISPR screens"/>
</dbReference>
<dbReference type="PRO" id="PR:Q03674"/>
<dbReference type="Proteomes" id="UP000002311">
    <property type="component" value="Chromosome XIII"/>
</dbReference>
<dbReference type="RNAct" id="Q03674">
    <property type="molecule type" value="protein"/>
</dbReference>
<dbReference type="GO" id="GO:0071944">
    <property type="term" value="C:cell periphery"/>
    <property type="evidence" value="ECO:0007005"/>
    <property type="project" value="SGD"/>
</dbReference>
<dbReference type="GO" id="GO:0005829">
    <property type="term" value="C:cytosol"/>
    <property type="evidence" value="ECO:0000318"/>
    <property type="project" value="GO_Central"/>
</dbReference>
<dbReference type="GO" id="GO:0005783">
    <property type="term" value="C:endoplasmic reticulum"/>
    <property type="evidence" value="ECO:0000318"/>
    <property type="project" value="GO_Central"/>
</dbReference>
<dbReference type="GO" id="GO:0005576">
    <property type="term" value="C:extracellular region"/>
    <property type="evidence" value="ECO:0000314"/>
    <property type="project" value="SGD"/>
</dbReference>
<dbReference type="GO" id="GO:0009277">
    <property type="term" value="C:fungal-type cell wall"/>
    <property type="evidence" value="ECO:0000314"/>
    <property type="project" value="SGD"/>
</dbReference>
<dbReference type="GO" id="GO:0005886">
    <property type="term" value="C:plasma membrane"/>
    <property type="evidence" value="ECO:0000318"/>
    <property type="project" value="GO_Central"/>
</dbReference>
<dbReference type="GO" id="GO:0098552">
    <property type="term" value="C:side of membrane"/>
    <property type="evidence" value="ECO:0007669"/>
    <property type="project" value="UniProtKB-KW"/>
</dbReference>
<dbReference type="GO" id="GO:0004622">
    <property type="term" value="F:lysophospholipase activity"/>
    <property type="evidence" value="ECO:0000314"/>
    <property type="project" value="SGD"/>
</dbReference>
<dbReference type="GO" id="GO:0004623">
    <property type="term" value="F:phospholipase A2 activity"/>
    <property type="evidence" value="ECO:0000318"/>
    <property type="project" value="GO_Central"/>
</dbReference>
<dbReference type="GO" id="GO:0046475">
    <property type="term" value="P:glycerophospholipid catabolic process"/>
    <property type="evidence" value="ECO:0000318"/>
    <property type="project" value="GO_Central"/>
</dbReference>
<dbReference type="GO" id="GO:0006650">
    <property type="term" value="P:glycerophospholipid metabolic process"/>
    <property type="evidence" value="ECO:0000314"/>
    <property type="project" value="SGD"/>
</dbReference>
<dbReference type="CDD" id="cd07203">
    <property type="entry name" value="cPLA2_Fungal_PLB"/>
    <property type="match status" value="1"/>
</dbReference>
<dbReference type="FunFam" id="3.40.1090.10:FF:000010">
    <property type="entry name" value="Lysophospholipase"/>
    <property type="match status" value="1"/>
</dbReference>
<dbReference type="Gene3D" id="3.40.1090.10">
    <property type="entry name" value="Cytosolic phospholipase A2 catalytic domain"/>
    <property type="match status" value="1"/>
</dbReference>
<dbReference type="InterPro" id="IPR016035">
    <property type="entry name" value="Acyl_Trfase/lysoPLipase"/>
</dbReference>
<dbReference type="InterPro" id="IPR002642">
    <property type="entry name" value="LysoPLipase_cat_dom"/>
</dbReference>
<dbReference type="PANTHER" id="PTHR10728">
    <property type="entry name" value="CYTOSOLIC PHOSPHOLIPASE A2"/>
    <property type="match status" value="1"/>
</dbReference>
<dbReference type="PANTHER" id="PTHR10728:SF33">
    <property type="entry name" value="LYSOPHOSPHOLIPASE 1-RELATED"/>
    <property type="match status" value="1"/>
</dbReference>
<dbReference type="Pfam" id="PF01735">
    <property type="entry name" value="PLA2_B"/>
    <property type="match status" value="1"/>
</dbReference>
<dbReference type="SMART" id="SM00022">
    <property type="entry name" value="PLAc"/>
    <property type="match status" value="1"/>
</dbReference>
<dbReference type="SUPFAM" id="SSF52151">
    <property type="entry name" value="FabD/lysophospholipase-like"/>
    <property type="match status" value="1"/>
</dbReference>
<dbReference type="PROSITE" id="PS51210">
    <property type="entry name" value="PLA2C"/>
    <property type="match status" value="1"/>
</dbReference>
<proteinExistence type="evidence at protein level"/>
<name>PLB2_YEAST</name>
<feature type="signal peptide" evidence="1">
    <location>
        <begin position="1"/>
        <end position="19"/>
    </location>
</feature>
<feature type="chain" id="PRO_0000024647" description="Lysophospholipase 2">
    <location>
        <begin position="20"/>
        <end position="680"/>
    </location>
</feature>
<feature type="propeptide" id="PRO_0000372443" description="Removed in mature form" evidence="1">
    <location>
        <begin position="681"/>
        <end position="706"/>
    </location>
</feature>
<feature type="domain" description="PLA2c" evidence="2">
    <location>
        <begin position="36"/>
        <end position="588"/>
    </location>
</feature>
<feature type="region of interest" description="Disordered" evidence="3">
    <location>
        <begin position="627"/>
        <end position="672"/>
    </location>
</feature>
<feature type="lipid moiety-binding region" description="GPI-anchor amidated asparagine" evidence="1">
    <location>
        <position position="680"/>
    </location>
</feature>
<feature type="glycosylation site" description="N-linked (GlcNAc...) asparagine" evidence="1">
    <location>
        <position position="47"/>
    </location>
</feature>
<feature type="glycosylation site" description="N-linked (GlcNAc...) asparagine" evidence="1">
    <location>
        <position position="80"/>
    </location>
</feature>
<feature type="glycosylation site" description="N-linked (GlcNAc...) asparagine" evidence="1">
    <location>
        <position position="94"/>
    </location>
</feature>
<feature type="glycosylation site" description="N-linked (GlcNAc...) asparagine" evidence="1">
    <location>
        <position position="125"/>
    </location>
</feature>
<feature type="glycosylation site" description="N-linked (GlcNAc...) asparagine" evidence="1">
    <location>
        <position position="162"/>
    </location>
</feature>
<feature type="glycosylation site" description="N-linked (GlcNAc...) asparagine" evidence="1">
    <location>
        <position position="181"/>
    </location>
</feature>
<feature type="glycosylation site" description="N-linked (GlcNAc...) asparagine" evidence="1">
    <location>
        <position position="193"/>
    </location>
</feature>
<feature type="glycosylation site" description="N-linked (GlcNAc...) asparagine" evidence="1">
    <location>
        <position position="217"/>
    </location>
</feature>
<feature type="glycosylation site" description="N-linked (GlcNAc...) asparagine" evidence="1">
    <location>
        <position position="279"/>
    </location>
</feature>
<feature type="glycosylation site" description="N-linked (GlcNAc...) asparagine" evidence="1">
    <location>
        <position position="309"/>
    </location>
</feature>
<feature type="glycosylation site" description="N-linked (GlcNAc...) asparagine" evidence="1">
    <location>
        <position position="365"/>
    </location>
</feature>
<feature type="glycosylation site" description="N-linked (GlcNAc...) asparagine" evidence="1">
    <location>
        <position position="390"/>
    </location>
</feature>
<feature type="glycosylation site" description="N-linked (GlcNAc...) asparagine" evidence="1">
    <location>
        <position position="491"/>
    </location>
</feature>
<feature type="glycosylation site" description="N-linked (GlcNAc...) asparagine" evidence="1">
    <location>
        <position position="515"/>
    </location>
</feature>
<feature type="glycosylation site" description="N-linked (GlcNAc...) asparagine" evidence="1">
    <location>
        <position position="524"/>
    </location>
</feature>
<feature type="glycosylation site" description="N-linked (GlcNAc...) asparagine" evidence="1">
    <location>
        <position position="543"/>
    </location>
</feature>
<feature type="glycosylation site" description="N-linked (GlcNAc...) asparagine" evidence="1">
    <location>
        <position position="567"/>
    </location>
</feature>
<feature type="glycosylation site" description="N-linked (GlcNAc...) asparagine" evidence="1">
    <location>
        <position position="584"/>
    </location>
</feature>
<feature type="glycosylation site" description="N-linked (GlcNAc...) asparagine" evidence="1">
    <location>
        <position position="598"/>
    </location>
</feature>
<feature type="glycosylation site" description="N-linked (GlcNAc...) asparagine" evidence="1">
    <location>
        <position position="630"/>
    </location>
</feature>
<feature type="glycosylation site" description="N-linked (GlcNAc...) asparagine" evidence="1">
    <location>
        <position position="634"/>
    </location>
</feature>
<feature type="glycosylation site" description="N-linked (GlcNAc...) asparagine" evidence="1">
    <location>
        <position position="642"/>
    </location>
</feature>
<feature type="glycosylation site" description="N-linked (GlcNAc...) asparagine" evidence="1">
    <location>
        <position position="648"/>
    </location>
</feature>
<feature type="glycosylation site" description="N-linked (GlcNAc...) asparagine" evidence="1">
    <location>
        <position position="652"/>
    </location>
</feature>
<feature type="glycosylation site" description="N-linked (GlcNAc...) asparagine" evidence="1">
    <location>
        <position position="658"/>
    </location>
</feature>
<keyword id="KW-0134">Cell wall</keyword>
<keyword id="KW-0325">Glycoprotein</keyword>
<keyword id="KW-0336">GPI-anchor</keyword>
<keyword id="KW-0378">Hydrolase</keyword>
<keyword id="KW-0442">Lipid degradation</keyword>
<keyword id="KW-0443">Lipid metabolism</keyword>
<keyword id="KW-0449">Lipoprotein</keyword>
<keyword id="KW-0472">Membrane</keyword>
<keyword id="KW-1185">Reference proteome</keyword>
<keyword id="KW-0964">Secreted</keyword>
<keyword id="KW-0732">Signal</keyword>